<evidence type="ECO:0000255" key="1">
    <source>
        <dbReference type="HAMAP-Rule" id="MF_01889"/>
    </source>
</evidence>
<evidence type="ECO:0000256" key="2">
    <source>
        <dbReference type="SAM" id="MobiDB-lite"/>
    </source>
</evidence>
<evidence type="ECO:0000305" key="3"/>
<accession>C9Y1J4</accession>
<dbReference type="EMBL" id="FN543093">
    <property type="protein sequence ID" value="CBA29978.1"/>
    <property type="status" value="ALT_INIT"/>
    <property type="molecule type" value="Genomic_DNA"/>
</dbReference>
<dbReference type="SMR" id="C9Y1J4"/>
<dbReference type="KEGG" id="ctu:CTU_16840"/>
<dbReference type="PATRIC" id="fig|693216.3.peg.1607"/>
<dbReference type="HOGENOM" id="CLU_092328_0_0_6"/>
<dbReference type="Proteomes" id="UP000002069">
    <property type="component" value="Chromosome"/>
</dbReference>
<dbReference type="GO" id="GO:0031241">
    <property type="term" value="C:periplasmic side of cell outer membrane"/>
    <property type="evidence" value="ECO:0007669"/>
    <property type="project" value="UniProtKB-UniRule"/>
</dbReference>
<dbReference type="GO" id="GO:0030234">
    <property type="term" value="F:enzyme regulator activity"/>
    <property type="evidence" value="ECO:0007669"/>
    <property type="project" value="UniProtKB-UniRule"/>
</dbReference>
<dbReference type="GO" id="GO:0009252">
    <property type="term" value="P:peptidoglycan biosynthetic process"/>
    <property type="evidence" value="ECO:0007669"/>
    <property type="project" value="UniProtKB-UniRule"/>
</dbReference>
<dbReference type="GO" id="GO:0008360">
    <property type="term" value="P:regulation of cell shape"/>
    <property type="evidence" value="ECO:0007669"/>
    <property type="project" value="UniProtKB-KW"/>
</dbReference>
<dbReference type="FunFam" id="3.40.50.10610:FF:000002">
    <property type="entry name" value="Penicillin-binding protein activator LpoB"/>
    <property type="match status" value="1"/>
</dbReference>
<dbReference type="Gene3D" id="3.40.50.10610">
    <property type="entry name" value="ABC-type transport auxiliary lipoprotein component"/>
    <property type="match status" value="1"/>
</dbReference>
<dbReference type="HAMAP" id="MF_01889">
    <property type="entry name" value="LpoB"/>
    <property type="match status" value="1"/>
</dbReference>
<dbReference type="InterPro" id="IPR014094">
    <property type="entry name" value="LpoB"/>
</dbReference>
<dbReference type="NCBIfam" id="TIGR02722">
    <property type="entry name" value="lp"/>
    <property type="match status" value="1"/>
</dbReference>
<dbReference type="PANTHER" id="PTHR40593">
    <property type="entry name" value="PENICILLIN-BINDING PROTEIN ACTIVATOR LPOB"/>
    <property type="match status" value="1"/>
</dbReference>
<dbReference type="PANTHER" id="PTHR40593:SF1">
    <property type="entry name" value="PENICILLIN-BINDING PROTEIN ACTIVATOR LPOB"/>
    <property type="match status" value="1"/>
</dbReference>
<dbReference type="Pfam" id="PF13036">
    <property type="entry name" value="LpoB"/>
    <property type="match status" value="1"/>
</dbReference>
<dbReference type="PROSITE" id="PS51257">
    <property type="entry name" value="PROKAR_LIPOPROTEIN"/>
    <property type="match status" value="1"/>
</dbReference>
<protein>
    <recommendedName>
        <fullName evidence="1">Penicillin-binding protein activator LpoB</fullName>
        <shortName evidence="1">PBP activator LpoB</shortName>
    </recommendedName>
</protein>
<feature type="signal peptide" evidence="1">
    <location>
        <begin position="1"/>
        <end position="20"/>
    </location>
</feature>
<feature type="chain" id="PRO_0000405780" description="Penicillin-binding protein activator LpoB">
    <location>
        <begin position="21"/>
        <end position="221"/>
    </location>
</feature>
<feature type="region of interest" description="Disordered" evidence="2">
    <location>
        <begin position="29"/>
        <end position="82"/>
    </location>
</feature>
<feature type="compositionally biased region" description="Pro residues" evidence="2">
    <location>
        <begin position="44"/>
        <end position="57"/>
    </location>
</feature>
<feature type="lipid moiety-binding region" description="N-palmitoyl cysteine" evidence="1">
    <location>
        <position position="21"/>
    </location>
</feature>
<feature type="lipid moiety-binding region" description="S-diacylglycerol cysteine" evidence="1">
    <location>
        <position position="21"/>
    </location>
</feature>
<organism>
    <name type="scientific">Cronobacter turicensis (strain DSM 18703 / CCUG 55852 / LMG 23827 / z3032)</name>
    <dbReference type="NCBI Taxonomy" id="693216"/>
    <lineage>
        <taxon>Bacteria</taxon>
        <taxon>Pseudomonadati</taxon>
        <taxon>Pseudomonadota</taxon>
        <taxon>Gammaproteobacteria</taxon>
        <taxon>Enterobacterales</taxon>
        <taxon>Enterobacteriaceae</taxon>
        <taxon>Cronobacter</taxon>
    </lineage>
</organism>
<reference key="1">
    <citation type="journal article" date="2011" name="J. Bacteriol.">
        <title>Complete genome sequence of Cronobacter turicensis LMG 23827, a food-borne pathogen causing deaths in neonates.</title>
        <authorList>
            <person name="Stephan R."/>
            <person name="Lehner A."/>
            <person name="Tischler P."/>
            <person name="Rattei T."/>
        </authorList>
    </citation>
    <scope>NUCLEOTIDE SEQUENCE [LARGE SCALE GENOMIC DNA]</scope>
    <source>
        <strain>DSM 18703 / CCUG 55852 / LMG 23827 / z3032</strain>
    </source>
</reference>
<keyword id="KW-0998">Cell outer membrane</keyword>
<keyword id="KW-0133">Cell shape</keyword>
<keyword id="KW-0449">Lipoprotein</keyword>
<keyword id="KW-0472">Membrane</keyword>
<keyword id="KW-0564">Palmitate</keyword>
<keyword id="KW-0573">Peptidoglycan synthesis</keyword>
<keyword id="KW-0732">Signal</keyword>
<sequence length="221" mass="23184">MLNRMYRYALLATVALALSGCILPGEQKPAPVEEAQPGTQQPTQPVPPPTQPVPTVPSVPSIPAQPGPIEHQPENATPEPKARTYDWNSAMAPMVGKMLQADGVNAGSVLLVDSVNNRTNGSLQTGPATEALRGALANNAKFTLVSAQQLSMAKQQLGLSPQDSLGSRSKAIGIARNVGAQYVLYANASGNVNAPTLQMQLMLVQTGEIIWSGKGAVQQTQ</sequence>
<gene>
    <name evidence="1" type="primary">lpoB</name>
    <name type="ordered locus">Ctu_16840</name>
</gene>
<proteinExistence type="inferred from homology"/>
<comment type="function">
    <text evidence="1">Regulator of peptidoglycan synthesis that is essential for the function of penicillin-binding protein 1B (PBP1b).</text>
</comment>
<comment type="subunit">
    <text evidence="1">Interacts with PBP1b.</text>
</comment>
<comment type="subcellular location">
    <subcellularLocation>
        <location evidence="1">Cell outer membrane</location>
        <topology evidence="1">Lipid-anchor</topology>
        <orientation evidence="1">Periplasmic side</orientation>
    </subcellularLocation>
</comment>
<comment type="similarity">
    <text evidence="1">Belongs to the LpoB family.</text>
</comment>
<comment type="sequence caution" evidence="3">
    <conflict type="erroneous initiation">
        <sequence resource="EMBL-CDS" id="CBA29978"/>
    </conflict>
    <text>Truncated N-terminus.</text>
</comment>
<name>LPOB_CROTZ</name>